<evidence type="ECO:0000255" key="1">
    <source>
        <dbReference type="HAMAP-Rule" id="MF_01287"/>
    </source>
</evidence>
<comment type="function">
    <text evidence="1">Is involved in the reduction of 2,3-digeranylgeranylglycerophospholipids (unsaturated archaeols) into 2,3-diphytanylglycerophospholipids (saturated archaeols) in the biosynthesis of archaeal membrane lipids. Catalyzes the formation of archaetidic acid (2,3-di-O-phytanyl-sn-glyceryl phosphate) from 2,3-di-O-geranylgeranylglyceryl phosphate (DGGGP) via the hydrogenation of each double bond of the isoprenoid chains. Is also probably able to reduce double bonds of geranyl groups in CDP-2,3-bis-O-(geranylgeranyl)-sn-glycerol and archaetidylserine, thus acting at various stages in the biosynthesis of archaeal membrane lipids.</text>
</comment>
<comment type="catalytic activity">
    <reaction evidence="1">
        <text>2,3-bis-O-(phytanyl)-sn-glycerol 1-phosphate + 8 NADP(+) = 2,3-bis-O-(geranylgeranyl)-sn-glycerol 1-phosphate + 8 NADPH + 8 H(+)</text>
        <dbReference type="Rhea" id="RHEA:36035"/>
        <dbReference type="ChEBI" id="CHEBI:15378"/>
        <dbReference type="ChEBI" id="CHEBI:57783"/>
        <dbReference type="ChEBI" id="CHEBI:58349"/>
        <dbReference type="ChEBI" id="CHEBI:58837"/>
        <dbReference type="ChEBI" id="CHEBI:73125"/>
        <dbReference type="EC" id="1.3.1.101"/>
    </reaction>
    <physiologicalReaction direction="right-to-left" evidence="1">
        <dbReference type="Rhea" id="RHEA:36037"/>
    </physiologicalReaction>
</comment>
<comment type="catalytic activity">
    <reaction evidence="1">
        <text>2,3-bis-O-(phytanyl)-sn-glycerol 1-phosphate + 8 NAD(+) = 2,3-bis-O-(geranylgeranyl)-sn-glycerol 1-phosphate + 8 NADH + 8 H(+)</text>
        <dbReference type="Rhea" id="RHEA:36039"/>
        <dbReference type="ChEBI" id="CHEBI:15378"/>
        <dbReference type="ChEBI" id="CHEBI:57540"/>
        <dbReference type="ChEBI" id="CHEBI:57945"/>
        <dbReference type="ChEBI" id="CHEBI:58837"/>
        <dbReference type="ChEBI" id="CHEBI:73125"/>
        <dbReference type="EC" id="1.3.1.101"/>
    </reaction>
    <physiologicalReaction direction="right-to-left" evidence="1">
        <dbReference type="Rhea" id="RHEA:36041"/>
    </physiologicalReaction>
</comment>
<comment type="catalytic activity">
    <reaction evidence="1">
        <text>a 2,3-bis-O-phytanyl-sn-glycerol 1-phospholipid + 8 A = a 2,3-bis-O-(geranylgeranyl)-sn-glycerol 1-phospholipid + 8 AH2</text>
        <dbReference type="Rhea" id="RHEA:64376"/>
        <dbReference type="ChEBI" id="CHEBI:13193"/>
        <dbReference type="ChEBI" id="CHEBI:17499"/>
        <dbReference type="ChEBI" id="CHEBI:138139"/>
        <dbReference type="ChEBI" id="CHEBI:138140"/>
    </reaction>
    <physiologicalReaction direction="right-to-left" evidence="1">
        <dbReference type="Rhea" id="RHEA:64378"/>
    </physiologicalReaction>
</comment>
<comment type="catalytic activity">
    <reaction evidence="1">
        <text>CDP-2,3-bis-O-(geranylgeranyl)-sn-glycerol + 8 AH2 = CDP-2,3-bis-O-(phytanyl)-sn-glycerol + 8 A</text>
        <dbReference type="Rhea" id="RHEA:84207"/>
        <dbReference type="ChEBI" id="CHEBI:13193"/>
        <dbReference type="ChEBI" id="CHEBI:17499"/>
        <dbReference type="ChEBI" id="CHEBI:58838"/>
        <dbReference type="ChEBI" id="CHEBI:74004"/>
    </reaction>
    <physiologicalReaction direction="left-to-right" evidence="1">
        <dbReference type="Rhea" id="RHEA:84208"/>
    </physiologicalReaction>
</comment>
<comment type="catalytic activity">
    <reaction evidence="1">
        <text>archaetidylserine + 8 AH2 = 2,3-bis-O-phytanyl-sn-glycero-3-phospho-L-serine + 8 A</text>
        <dbReference type="Rhea" id="RHEA:84215"/>
        <dbReference type="ChEBI" id="CHEBI:13193"/>
        <dbReference type="ChEBI" id="CHEBI:17499"/>
        <dbReference type="ChEBI" id="CHEBI:71517"/>
        <dbReference type="ChEBI" id="CHEBI:74853"/>
    </reaction>
    <physiologicalReaction direction="left-to-right" evidence="1">
        <dbReference type="Rhea" id="RHEA:84216"/>
    </physiologicalReaction>
</comment>
<comment type="cofactor">
    <cofactor evidence="1">
        <name>FAD</name>
        <dbReference type="ChEBI" id="CHEBI:57692"/>
    </cofactor>
    <text evidence="1">Binds 1 FAD per subunit.</text>
</comment>
<comment type="pathway">
    <text evidence="1">Membrane lipid metabolism; glycerophospholipid metabolism.</text>
</comment>
<comment type="miscellaneous">
    <text evidence="1">Reduction reaction proceeds via syn addition of hydrogen for double bonds.</text>
</comment>
<comment type="similarity">
    <text evidence="1">Belongs to the geranylgeranyl reductase family. DGGGPL reductase subfamily.</text>
</comment>
<accession>Q979Y7</accession>
<organism>
    <name type="scientific">Thermoplasma volcanium (strain ATCC 51530 / DSM 4299 / JCM 9571 / NBRC 15438 / GSS1)</name>
    <dbReference type="NCBI Taxonomy" id="273116"/>
    <lineage>
        <taxon>Archaea</taxon>
        <taxon>Methanobacteriati</taxon>
        <taxon>Thermoplasmatota</taxon>
        <taxon>Thermoplasmata</taxon>
        <taxon>Thermoplasmatales</taxon>
        <taxon>Thermoplasmataceae</taxon>
        <taxon>Thermoplasma</taxon>
    </lineage>
</organism>
<dbReference type="EC" id="1.3.1.101" evidence="1"/>
<dbReference type="EMBL" id="BA000011">
    <property type="protein sequence ID" value="BAB60165.1"/>
    <property type="molecule type" value="Genomic_DNA"/>
</dbReference>
<dbReference type="RefSeq" id="WP_010917251.1">
    <property type="nucleotide sequence ID" value="NC_002689.2"/>
</dbReference>
<dbReference type="SMR" id="Q979Y7"/>
<dbReference type="STRING" id="273116.gene:9381816"/>
<dbReference type="PaxDb" id="273116-14325261"/>
<dbReference type="DNASU" id="1441133"/>
<dbReference type="GeneID" id="1441133"/>
<dbReference type="KEGG" id="tvo:TVG1046096"/>
<dbReference type="eggNOG" id="arCOG00570">
    <property type="taxonomic scope" value="Archaea"/>
</dbReference>
<dbReference type="HOGENOM" id="CLU_024648_0_0_2"/>
<dbReference type="OrthoDB" id="6062at2157"/>
<dbReference type="PhylomeDB" id="Q979Y7"/>
<dbReference type="UniPathway" id="UPA00940"/>
<dbReference type="Proteomes" id="UP000001017">
    <property type="component" value="Chromosome"/>
</dbReference>
<dbReference type="GO" id="GO:0016020">
    <property type="term" value="C:membrane"/>
    <property type="evidence" value="ECO:0007669"/>
    <property type="project" value="GOC"/>
</dbReference>
<dbReference type="GO" id="GO:0050660">
    <property type="term" value="F:flavin adenine dinucleotide binding"/>
    <property type="evidence" value="ECO:0007669"/>
    <property type="project" value="UniProtKB-UniRule"/>
</dbReference>
<dbReference type="GO" id="GO:0045550">
    <property type="term" value="F:geranylgeranyl reductase activity"/>
    <property type="evidence" value="ECO:0007669"/>
    <property type="project" value="InterPro"/>
</dbReference>
<dbReference type="GO" id="GO:0051287">
    <property type="term" value="F:NAD binding"/>
    <property type="evidence" value="ECO:0007669"/>
    <property type="project" value="UniProtKB-UniRule"/>
</dbReference>
<dbReference type="GO" id="GO:0050661">
    <property type="term" value="F:NADP binding"/>
    <property type="evidence" value="ECO:0007669"/>
    <property type="project" value="UniProtKB-UniRule"/>
</dbReference>
<dbReference type="GO" id="GO:0016628">
    <property type="term" value="F:oxidoreductase activity, acting on the CH-CH group of donors, NAD or NADP as acceptor"/>
    <property type="evidence" value="ECO:0007669"/>
    <property type="project" value="UniProtKB-UniRule"/>
</dbReference>
<dbReference type="GO" id="GO:0046474">
    <property type="term" value="P:glycerophospholipid biosynthetic process"/>
    <property type="evidence" value="ECO:0007669"/>
    <property type="project" value="UniProtKB-UniRule"/>
</dbReference>
<dbReference type="GO" id="GO:0046467">
    <property type="term" value="P:membrane lipid biosynthetic process"/>
    <property type="evidence" value="ECO:0007669"/>
    <property type="project" value="InterPro"/>
</dbReference>
<dbReference type="Gene3D" id="3.30.9.10">
    <property type="entry name" value="D-Amino Acid Oxidase, subunit A, domain 2"/>
    <property type="match status" value="1"/>
</dbReference>
<dbReference type="Gene3D" id="3.50.50.60">
    <property type="entry name" value="FAD/NAD(P)-binding domain"/>
    <property type="match status" value="1"/>
</dbReference>
<dbReference type="HAMAP" id="MF_01287">
    <property type="entry name" value="DGGGPL_reductase"/>
    <property type="match status" value="1"/>
</dbReference>
<dbReference type="InterPro" id="IPR023590">
    <property type="entry name" value="DGGGPL_reductase"/>
</dbReference>
<dbReference type="InterPro" id="IPR054984">
    <property type="entry name" value="DGGPL_reductase"/>
</dbReference>
<dbReference type="InterPro" id="IPR036188">
    <property type="entry name" value="FAD/NAD-bd_sf"/>
</dbReference>
<dbReference type="InterPro" id="IPR011777">
    <property type="entry name" value="Geranylgeranyl_Rdtase_fam"/>
</dbReference>
<dbReference type="InterPro" id="IPR050407">
    <property type="entry name" value="Geranylgeranyl_reductase"/>
</dbReference>
<dbReference type="InterPro" id="IPR054715">
    <property type="entry name" value="GGR_cat"/>
</dbReference>
<dbReference type="NCBIfam" id="NF041160">
    <property type="entry name" value="DGGPL_Thplmales"/>
    <property type="match status" value="1"/>
</dbReference>
<dbReference type="NCBIfam" id="TIGR02032">
    <property type="entry name" value="GG-red-SF"/>
    <property type="match status" value="1"/>
</dbReference>
<dbReference type="PANTHER" id="PTHR42685:SF18">
    <property type="entry name" value="DIGERANYLGERANYLGLYCEROPHOSPHOLIPID REDUCTASE"/>
    <property type="match status" value="1"/>
</dbReference>
<dbReference type="PANTHER" id="PTHR42685">
    <property type="entry name" value="GERANYLGERANYL DIPHOSPHATE REDUCTASE"/>
    <property type="match status" value="1"/>
</dbReference>
<dbReference type="Pfam" id="PF12831">
    <property type="entry name" value="FAD_oxidored"/>
    <property type="match status" value="1"/>
</dbReference>
<dbReference type="Pfam" id="PF22578">
    <property type="entry name" value="GGR_cat"/>
    <property type="match status" value="1"/>
</dbReference>
<dbReference type="PRINTS" id="PR00420">
    <property type="entry name" value="RNGMNOXGNASE"/>
</dbReference>
<dbReference type="SUPFAM" id="SSF51905">
    <property type="entry name" value="FAD/NAD(P)-binding domain"/>
    <property type="match status" value="1"/>
</dbReference>
<keyword id="KW-0274">FAD</keyword>
<keyword id="KW-0285">Flavoprotein</keyword>
<keyword id="KW-0444">Lipid biosynthesis</keyword>
<keyword id="KW-0443">Lipid metabolism</keyword>
<keyword id="KW-0520">NAD</keyword>
<keyword id="KW-0521">NADP</keyword>
<keyword id="KW-0560">Oxidoreductase</keyword>
<keyword id="KW-0594">Phospholipid biosynthesis</keyword>
<keyword id="KW-1208">Phospholipid metabolism</keyword>
<sequence length="396" mass="43203">METYDVLVIGGGPGGSTAARYAAKYGLRTLMIEKRPEIGSPVRCGEGLSKGILNEADIKPDKSFIANEVKGARIYGPSEKRPIILQSEKAGNEVGFVLERDKFDKHLAALAAKAGADVWVKSPALGVIKEDGKVAGAKIRHENNVVEVRAKMVIAADGFESEFGRWAGLKSVILARNDIISALQYRMINIDVDPDYTDFYLGSIAPGGYIWVFPKGEGMANVGIGSSINFIHNRLELKNYLDRFIENHPGLKKGQDIQLVTGGVSVSKVKMPITMPGLMLVGDAARLIDPITGGGIANAIVSGMYAAQVSKEAIESNDYSPQMMGKYEKLVKDRFERKHLRNWVAKEKLAQLSDETLDKLVDIVSEQVLTTISVEAILKAIAEKYPEVVKELEDLI</sequence>
<proteinExistence type="inferred from homology"/>
<feature type="chain" id="PRO_0000351479" description="Digeranylgeranylglycerophospholipid reductase">
    <location>
        <begin position="1"/>
        <end position="396"/>
    </location>
</feature>
<feature type="binding site" evidence="1">
    <location>
        <position position="14"/>
    </location>
    <ligand>
        <name>FAD</name>
        <dbReference type="ChEBI" id="CHEBI:57692"/>
    </ligand>
</feature>
<feature type="binding site" evidence="1">
    <location>
        <position position="33"/>
    </location>
    <ligand>
        <name>FAD</name>
        <dbReference type="ChEBI" id="CHEBI:57692"/>
    </ligand>
</feature>
<feature type="binding site" evidence="1">
    <location>
        <position position="44"/>
    </location>
    <ligand>
        <name>FAD</name>
        <dbReference type="ChEBI" id="CHEBI:57692"/>
    </ligand>
</feature>
<feature type="binding site" evidence="1">
    <location>
        <position position="45"/>
    </location>
    <ligand>
        <name>FAD</name>
        <dbReference type="ChEBI" id="CHEBI:57692"/>
    </ligand>
</feature>
<feature type="binding site" evidence="1">
    <location>
        <position position="47"/>
    </location>
    <ligand>
        <name>FAD</name>
        <dbReference type="ChEBI" id="CHEBI:57692"/>
    </ligand>
</feature>
<feature type="binding site" evidence="1">
    <location>
        <position position="100"/>
    </location>
    <ligand>
        <name>FAD</name>
        <dbReference type="ChEBI" id="CHEBI:57692"/>
    </ligand>
</feature>
<feature type="binding site" evidence="1">
    <location>
        <position position="124"/>
    </location>
    <ligand>
        <name>FAD</name>
        <dbReference type="ChEBI" id="CHEBI:57692"/>
    </ligand>
</feature>
<feature type="binding site" evidence="1">
    <location>
        <position position="162"/>
    </location>
    <ligand>
        <name>FAD</name>
        <dbReference type="ChEBI" id="CHEBI:57692"/>
    </ligand>
</feature>
<feature type="binding site" evidence="1">
    <location>
        <position position="283"/>
    </location>
    <ligand>
        <name>FAD</name>
        <dbReference type="ChEBI" id="CHEBI:57692"/>
    </ligand>
</feature>
<feature type="binding site" evidence="1">
    <location>
        <position position="295"/>
    </location>
    <ligand>
        <name>FAD</name>
        <dbReference type="ChEBI" id="CHEBI:57692"/>
    </ligand>
</feature>
<feature type="binding site" evidence="1">
    <location>
        <position position="296"/>
    </location>
    <ligand>
        <name>FAD</name>
        <dbReference type="ChEBI" id="CHEBI:57692"/>
    </ligand>
</feature>
<feature type="binding site" evidence="1">
    <location>
        <position position="338"/>
    </location>
    <ligand>
        <name>a 2,3-bis-O-(geranylgeranyl)-sn-glycerol 1-phospholipid</name>
        <dbReference type="ChEBI" id="CHEBI:138140"/>
    </ligand>
</feature>
<feature type="binding site" evidence="1">
    <location>
        <position position="374"/>
    </location>
    <ligand>
        <name>a 2,3-bis-O-(geranylgeranyl)-sn-glycerol 1-phospholipid</name>
        <dbReference type="ChEBI" id="CHEBI:138140"/>
    </ligand>
</feature>
<gene>
    <name type="ordered locus">TV1023</name>
    <name type="ORF">TVG1046096</name>
</gene>
<protein>
    <recommendedName>
        <fullName evidence="1">Digeranylgeranylglycerophospholipid reductase</fullName>
        <shortName evidence="1">DGGGPL reductase</shortName>
        <ecNumber evidence="1">1.3.1.101</ecNumber>
    </recommendedName>
    <alternativeName>
        <fullName evidence="1">2,3-bis-O-geranylgeranylglyceryl phosphate reductase</fullName>
    </alternativeName>
    <alternativeName>
        <fullName evidence="1">Geranylgeranyl reductase</fullName>
        <shortName evidence="1">GGR</shortName>
    </alternativeName>
</protein>
<name>GGR_THEVO</name>
<reference key="1">
    <citation type="journal article" date="2000" name="Proc. Natl. Acad. Sci. U.S.A.">
        <title>Archaeal adaptation to higher temperatures revealed by genomic sequence of Thermoplasma volcanium.</title>
        <authorList>
            <person name="Kawashima T."/>
            <person name="Amano N."/>
            <person name="Koike H."/>
            <person name="Makino S."/>
            <person name="Higuchi S."/>
            <person name="Kawashima-Ohya Y."/>
            <person name="Watanabe K."/>
            <person name="Yamazaki M."/>
            <person name="Kanehori K."/>
            <person name="Kawamoto T."/>
            <person name="Nunoshiba T."/>
            <person name="Yamamoto Y."/>
            <person name="Aramaki H."/>
            <person name="Makino K."/>
            <person name="Suzuki M."/>
        </authorList>
    </citation>
    <scope>NUCLEOTIDE SEQUENCE [LARGE SCALE GENOMIC DNA]</scope>
    <source>
        <strain>ATCC 51530 / DSM 4299 / JCM 9571 / NBRC 15438 / GSS1</strain>
    </source>
</reference>